<keyword id="KW-0997">Cell inner membrane</keyword>
<keyword id="KW-1003">Cell membrane</keyword>
<keyword id="KW-0342">GTP-binding</keyword>
<keyword id="KW-0378">Hydrolase</keyword>
<keyword id="KW-0472">Membrane</keyword>
<keyword id="KW-0547">Nucleotide-binding</keyword>
<keyword id="KW-0648">Protein biosynthesis</keyword>
<keyword id="KW-1185">Reference proteome</keyword>
<reference key="1">
    <citation type="journal article" date="2000" name="Nature">
        <title>DNA sequence of both chromosomes of the cholera pathogen Vibrio cholerae.</title>
        <authorList>
            <person name="Heidelberg J.F."/>
            <person name="Eisen J.A."/>
            <person name="Nelson W.C."/>
            <person name="Clayton R.A."/>
            <person name="Gwinn M.L."/>
            <person name="Dodson R.J."/>
            <person name="Haft D.H."/>
            <person name="Hickey E.K."/>
            <person name="Peterson J.D."/>
            <person name="Umayam L.A."/>
            <person name="Gill S.R."/>
            <person name="Nelson K.E."/>
            <person name="Read T.D."/>
            <person name="Tettelin H."/>
            <person name="Richardson D.L."/>
            <person name="Ermolaeva M.D."/>
            <person name="Vamathevan J.J."/>
            <person name="Bass S."/>
            <person name="Qin H."/>
            <person name="Dragoi I."/>
            <person name="Sellers P."/>
            <person name="McDonald L.A."/>
            <person name="Utterback T.R."/>
            <person name="Fleischmann R.D."/>
            <person name="Nierman W.C."/>
            <person name="White O."/>
            <person name="Salzberg S.L."/>
            <person name="Smith H.O."/>
            <person name="Colwell R.R."/>
            <person name="Mekalanos J.J."/>
            <person name="Venter J.C."/>
            <person name="Fraser C.M."/>
        </authorList>
    </citation>
    <scope>NUCLEOTIDE SEQUENCE [LARGE SCALE GENOMIC DNA]</scope>
    <source>
        <strain>ATCC 39315 / El Tor Inaba N16961</strain>
    </source>
</reference>
<feature type="chain" id="PRO_0000176370" description="Elongation factor 4">
    <location>
        <begin position="1"/>
        <end position="597"/>
    </location>
</feature>
<feature type="domain" description="tr-type G">
    <location>
        <begin position="2"/>
        <end position="184"/>
    </location>
</feature>
<feature type="binding site" evidence="1">
    <location>
        <begin position="14"/>
        <end position="19"/>
    </location>
    <ligand>
        <name>GTP</name>
        <dbReference type="ChEBI" id="CHEBI:37565"/>
    </ligand>
</feature>
<feature type="binding site" evidence="1">
    <location>
        <begin position="131"/>
        <end position="134"/>
    </location>
    <ligand>
        <name>GTP</name>
        <dbReference type="ChEBI" id="CHEBI:37565"/>
    </ligand>
</feature>
<accession>Q9KPB0</accession>
<sequence>MKHIRNFSIIAHIDHGKSTLSDRLIQVCGGLSDREMAEQVLDSMDLERERGITIKAQSVTLDYTAKDGQTYQLNFIDTPGHVDFAYEVSRSLAACEGALLVVDAGQGVEAQTLANCYTAIEMDLEVVPILNKIDLPAAEPERVAEEIEDIVGIDAIDAVRCSAKTGVGVDEVLEKIVSAIPAPQGDPDAPLQALIIDSWFDNYLGVVSLVRIKNGSLKKNDKIKVMSTGQTWGVDRLGIFTPKQVDTDSLDTGEVGWVVCGIKDIMGAPVGDTLTLAKNGCEKALPGFKKVKPQVYAGLFPVSSDDYDNFRDALGKLSLNDASLFYEPETSAALGFGFRCGFLGMLHMEIIQERLEREYDLDLITTAPTVVYEVLKTNKEIVYVDSPAKLPAINDIEEIREPIARCNILVPADYLGNVITLCIEKRGTQVDMVYHGNQVALTYDIPMAEVVLDFFDRLKSTSRGYASLDYGFQRFEMSHMVRVDVLLNGDKVDALAIITHRDNSQTRGRQLVEKMKEFIPRQMFDIAIQAAIGNHIIARSTVKQLRKNVLAKCYGGDVSRKKKLLKKQKEGKKRMKQIGNVELPQEAFLAILHVGKD</sequence>
<protein>
    <recommendedName>
        <fullName evidence="1">Elongation factor 4</fullName>
        <shortName evidence="1">EF-4</shortName>
        <ecNumber evidence="1">3.6.5.n1</ecNumber>
    </recommendedName>
    <alternativeName>
        <fullName evidence="1">Ribosomal back-translocase LepA</fullName>
    </alternativeName>
</protein>
<comment type="function">
    <text evidence="1">Required for accurate and efficient protein synthesis under certain stress conditions. May act as a fidelity factor of the translation reaction, by catalyzing a one-codon backward translocation of tRNAs on improperly translocated ribosomes. Back-translocation proceeds from a post-translocation (POST) complex to a pre-translocation (PRE) complex, thus giving elongation factor G a second chance to translocate the tRNAs correctly. Binds to ribosomes in a GTP-dependent manner.</text>
</comment>
<comment type="catalytic activity">
    <reaction evidence="1">
        <text>GTP + H2O = GDP + phosphate + H(+)</text>
        <dbReference type="Rhea" id="RHEA:19669"/>
        <dbReference type="ChEBI" id="CHEBI:15377"/>
        <dbReference type="ChEBI" id="CHEBI:15378"/>
        <dbReference type="ChEBI" id="CHEBI:37565"/>
        <dbReference type="ChEBI" id="CHEBI:43474"/>
        <dbReference type="ChEBI" id="CHEBI:58189"/>
        <dbReference type="EC" id="3.6.5.n1"/>
    </reaction>
</comment>
<comment type="subcellular location">
    <subcellularLocation>
        <location evidence="1">Cell inner membrane</location>
        <topology evidence="1">Peripheral membrane protein</topology>
        <orientation evidence="1">Cytoplasmic side</orientation>
    </subcellularLocation>
</comment>
<comment type="similarity">
    <text evidence="1">Belongs to the TRAFAC class translation factor GTPase superfamily. Classic translation factor GTPase family. LepA subfamily.</text>
</comment>
<gene>
    <name evidence="1" type="primary">lepA</name>
    <name type="ordered locus">VC_2463</name>
</gene>
<proteinExistence type="inferred from homology"/>
<dbReference type="EC" id="3.6.5.n1" evidence="1"/>
<dbReference type="EMBL" id="AE003852">
    <property type="protein sequence ID" value="AAF95605.1"/>
    <property type="molecule type" value="Genomic_DNA"/>
</dbReference>
<dbReference type="PIR" id="D82073">
    <property type="entry name" value="D82073"/>
</dbReference>
<dbReference type="RefSeq" id="NP_232092.1">
    <property type="nucleotide sequence ID" value="NC_002505.1"/>
</dbReference>
<dbReference type="RefSeq" id="WP_000680632.1">
    <property type="nucleotide sequence ID" value="NZ_LT906614.1"/>
</dbReference>
<dbReference type="SMR" id="Q9KPB0"/>
<dbReference type="STRING" id="243277.VC_2463"/>
<dbReference type="DNASU" id="2613005"/>
<dbReference type="EnsemblBacteria" id="AAF95605">
    <property type="protein sequence ID" value="AAF95605"/>
    <property type="gene ID" value="VC_2463"/>
</dbReference>
<dbReference type="GeneID" id="69718931"/>
<dbReference type="KEGG" id="vch:VC_2463"/>
<dbReference type="PATRIC" id="fig|243277.26.peg.2348"/>
<dbReference type="eggNOG" id="COG0481">
    <property type="taxonomic scope" value="Bacteria"/>
</dbReference>
<dbReference type="HOGENOM" id="CLU_009995_3_3_6"/>
<dbReference type="Proteomes" id="UP000000584">
    <property type="component" value="Chromosome 1"/>
</dbReference>
<dbReference type="GO" id="GO:0005886">
    <property type="term" value="C:plasma membrane"/>
    <property type="evidence" value="ECO:0007669"/>
    <property type="project" value="UniProtKB-SubCell"/>
</dbReference>
<dbReference type="GO" id="GO:0005525">
    <property type="term" value="F:GTP binding"/>
    <property type="evidence" value="ECO:0007669"/>
    <property type="project" value="UniProtKB-UniRule"/>
</dbReference>
<dbReference type="GO" id="GO:0003924">
    <property type="term" value="F:GTPase activity"/>
    <property type="evidence" value="ECO:0007669"/>
    <property type="project" value="UniProtKB-UniRule"/>
</dbReference>
<dbReference type="GO" id="GO:0097216">
    <property type="term" value="F:guanosine tetraphosphate binding"/>
    <property type="evidence" value="ECO:0007669"/>
    <property type="project" value="UniProtKB-ARBA"/>
</dbReference>
<dbReference type="GO" id="GO:0043022">
    <property type="term" value="F:ribosome binding"/>
    <property type="evidence" value="ECO:0000318"/>
    <property type="project" value="GO_Central"/>
</dbReference>
<dbReference type="GO" id="GO:0003746">
    <property type="term" value="F:translation elongation factor activity"/>
    <property type="evidence" value="ECO:0007669"/>
    <property type="project" value="UniProtKB-UniRule"/>
</dbReference>
<dbReference type="GO" id="GO:0045727">
    <property type="term" value="P:positive regulation of translation"/>
    <property type="evidence" value="ECO:0000318"/>
    <property type="project" value="GO_Central"/>
</dbReference>
<dbReference type="CDD" id="cd03699">
    <property type="entry name" value="EF4_II"/>
    <property type="match status" value="1"/>
</dbReference>
<dbReference type="CDD" id="cd16260">
    <property type="entry name" value="EF4_III"/>
    <property type="match status" value="1"/>
</dbReference>
<dbReference type="CDD" id="cd01890">
    <property type="entry name" value="LepA"/>
    <property type="match status" value="1"/>
</dbReference>
<dbReference type="CDD" id="cd03709">
    <property type="entry name" value="lepA_C"/>
    <property type="match status" value="1"/>
</dbReference>
<dbReference type="FunFam" id="3.40.50.300:FF:000078">
    <property type="entry name" value="Elongation factor 4"/>
    <property type="match status" value="1"/>
</dbReference>
<dbReference type="FunFam" id="2.40.30.10:FF:000015">
    <property type="entry name" value="Translation factor GUF1, mitochondrial"/>
    <property type="match status" value="1"/>
</dbReference>
<dbReference type="FunFam" id="3.30.70.240:FF:000007">
    <property type="entry name" value="Translation factor GUF1, mitochondrial"/>
    <property type="match status" value="1"/>
</dbReference>
<dbReference type="FunFam" id="3.30.70.2570:FF:000001">
    <property type="entry name" value="Translation factor GUF1, mitochondrial"/>
    <property type="match status" value="1"/>
</dbReference>
<dbReference type="FunFam" id="3.30.70.870:FF:000004">
    <property type="entry name" value="Translation factor GUF1, mitochondrial"/>
    <property type="match status" value="1"/>
</dbReference>
<dbReference type="Gene3D" id="3.30.70.240">
    <property type="match status" value="1"/>
</dbReference>
<dbReference type="Gene3D" id="3.30.70.2570">
    <property type="entry name" value="Elongation factor 4, C-terminal domain"/>
    <property type="match status" value="1"/>
</dbReference>
<dbReference type="Gene3D" id="3.30.70.870">
    <property type="entry name" value="Elongation Factor G (Translational Gtpase), domain 3"/>
    <property type="match status" value="1"/>
</dbReference>
<dbReference type="Gene3D" id="3.40.50.300">
    <property type="entry name" value="P-loop containing nucleotide triphosphate hydrolases"/>
    <property type="match status" value="1"/>
</dbReference>
<dbReference type="Gene3D" id="2.40.30.10">
    <property type="entry name" value="Translation factors"/>
    <property type="match status" value="1"/>
</dbReference>
<dbReference type="HAMAP" id="MF_00071">
    <property type="entry name" value="LepA"/>
    <property type="match status" value="1"/>
</dbReference>
<dbReference type="InterPro" id="IPR006297">
    <property type="entry name" value="EF-4"/>
</dbReference>
<dbReference type="InterPro" id="IPR035647">
    <property type="entry name" value="EFG_III/V"/>
</dbReference>
<dbReference type="InterPro" id="IPR000640">
    <property type="entry name" value="EFG_V-like"/>
</dbReference>
<dbReference type="InterPro" id="IPR004161">
    <property type="entry name" value="EFTu-like_2"/>
</dbReference>
<dbReference type="InterPro" id="IPR031157">
    <property type="entry name" value="G_TR_CS"/>
</dbReference>
<dbReference type="InterPro" id="IPR038363">
    <property type="entry name" value="LepA_C_sf"/>
</dbReference>
<dbReference type="InterPro" id="IPR013842">
    <property type="entry name" value="LepA_CTD"/>
</dbReference>
<dbReference type="InterPro" id="IPR035654">
    <property type="entry name" value="LepA_IV"/>
</dbReference>
<dbReference type="InterPro" id="IPR027417">
    <property type="entry name" value="P-loop_NTPase"/>
</dbReference>
<dbReference type="InterPro" id="IPR005225">
    <property type="entry name" value="Small_GTP-bd"/>
</dbReference>
<dbReference type="InterPro" id="IPR000795">
    <property type="entry name" value="T_Tr_GTP-bd_dom"/>
</dbReference>
<dbReference type="InterPro" id="IPR009000">
    <property type="entry name" value="Transl_B-barrel_sf"/>
</dbReference>
<dbReference type="NCBIfam" id="TIGR01393">
    <property type="entry name" value="lepA"/>
    <property type="match status" value="1"/>
</dbReference>
<dbReference type="NCBIfam" id="TIGR00231">
    <property type="entry name" value="small_GTP"/>
    <property type="match status" value="1"/>
</dbReference>
<dbReference type="PANTHER" id="PTHR43512:SF4">
    <property type="entry name" value="TRANSLATION FACTOR GUF1 HOMOLOG, CHLOROPLASTIC"/>
    <property type="match status" value="1"/>
</dbReference>
<dbReference type="PANTHER" id="PTHR43512">
    <property type="entry name" value="TRANSLATION FACTOR GUF1-RELATED"/>
    <property type="match status" value="1"/>
</dbReference>
<dbReference type="Pfam" id="PF00679">
    <property type="entry name" value="EFG_C"/>
    <property type="match status" value="1"/>
</dbReference>
<dbReference type="Pfam" id="PF00009">
    <property type="entry name" value="GTP_EFTU"/>
    <property type="match status" value="1"/>
</dbReference>
<dbReference type="Pfam" id="PF03144">
    <property type="entry name" value="GTP_EFTU_D2"/>
    <property type="match status" value="1"/>
</dbReference>
<dbReference type="Pfam" id="PF06421">
    <property type="entry name" value="LepA_C"/>
    <property type="match status" value="1"/>
</dbReference>
<dbReference type="PRINTS" id="PR00315">
    <property type="entry name" value="ELONGATNFCT"/>
</dbReference>
<dbReference type="SUPFAM" id="SSF54980">
    <property type="entry name" value="EF-G C-terminal domain-like"/>
    <property type="match status" value="2"/>
</dbReference>
<dbReference type="SUPFAM" id="SSF52540">
    <property type="entry name" value="P-loop containing nucleoside triphosphate hydrolases"/>
    <property type="match status" value="1"/>
</dbReference>
<dbReference type="SUPFAM" id="SSF50447">
    <property type="entry name" value="Translation proteins"/>
    <property type="match status" value="1"/>
</dbReference>
<dbReference type="PROSITE" id="PS00301">
    <property type="entry name" value="G_TR_1"/>
    <property type="match status" value="1"/>
</dbReference>
<dbReference type="PROSITE" id="PS51722">
    <property type="entry name" value="G_TR_2"/>
    <property type="match status" value="1"/>
</dbReference>
<organism>
    <name type="scientific">Vibrio cholerae serotype O1 (strain ATCC 39315 / El Tor Inaba N16961)</name>
    <dbReference type="NCBI Taxonomy" id="243277"/>
    <lineage>
        <taxon>Bacteria</taxon>
        <taxon>Pseudomonadati</taxon>
        <taxon>Pseudomonadota</taxon>
        <taxon>Gammaproteobacteria</taxon>
        <taxon>Vibrionales</taxon>
        <taxon>Vibrionaceae</taxon>
        <taxon>Vibrio</taxon>
    </lineage>
</organism>
<evidence type="ECO:0000255" key="1">
    <source>
        <dbReference type="HAMAP-Rule" id="MF_00071"/>
    </source>
</evidence>
<name>LEPA_VIBCH</name>